<gene>
    <name evidence="1" type="primary">purL</name>
    <name type="ordered locus">Cj0955</name>
</gene>
<keyword id="KW-0067">ATP-binding</keyword>
<keyword id="KW-0963">Cytoplasm</keyword>
<keyword id="KW-0436">Ligase</keyword>
<keyword id="KW-0460">Magnesium</keyword>
<keyword id="KW-0479">Metal-binding</keyword>
<keyword id="KW-0547">Nucleotide-binding</keyword>
<keyword id="KW-0658">Purine biosynthesis</keyword>
<keyword id="KW-1185">Reference proteome</keyword>
<organism>
    <name type="scientific">Campylobacter jejuni subsp. jejuni serotype O:2 (strain ATCC 700819 / NCTC 11168)</name>
    <dbReference type="NCBI Taxonomy" id="192222"/>
    <lineage>
        <taxon>Bacteria</taxon>
        <taxon>Pseudomonadati</taxon>
        <taxon>Campylobacterota</taxon>
        <taxon>Epsilonproteobacteria</taxon>
        <taxon>Campylobacterales</taxon>
        <taxon>Campylobacteraceae</taxon>
        <taxon>Campylobacter</taxon>
    </lineage>
</organism>
<reference key="1">
    <citation type="journal article" date="2000" name="Nature">
        <title>The genome sequence of the food-borne pathogen Campylobacter jejuni reveals hypervariable sequences.</title>
        <authorList>
            <person name="Parkhill J."/>
            <person name="Wren B.W."/>
            <person name="Mungall K.L."/>
            <person name="Ketley J.M."/>
            <person name="Churcher C.M."/>
            <person name="Basham D."/>
            <person name="Chillingworth T."/>
            <person name="Davies R.M."/>
            <person name="Feltwell T."/>
            <person name="Holroyd S."/>
            <person name="Jagels K."/>
            <person name="Karlyshev A.V."/>
            <person name="Moule S."/>
            <person name="Pallen M.J."/>
            <person name="Penn C.W."/>
            <person name="Quail M.A."/>
            <person name="Rajandream M.A."/>
            <person name="Rutherford K.M."/>
            <person name="van Vliet A.H.M."/>
            <person name="Whitehead S."/>
            <person name="Barrell B.G."/>
        </authorList>
    </citation>
    <scope>NUCLEOTIDE SEQUENCE [LARGE SCALE GENOMIC DNA]</scope>
    <source>
        <strain>ATCC 700819 / NCTC 11168</strain>
    </source>
</reference>
<comment type="function">
    <text evidence="1">Part of the phosphoribosylformylglycinamidine synthase complex involved in the purines biosynthetic pathway. Catalyzes the ATP-dependent conversion of formylglycinamide ribonucleotide (FGAR) and glutamine to yield formylglycinamidine ribonucleotide (FGAM) and glutamate. The FGAM synthase complex is composed of three subunits. PurQ produces an ammonia molecule by converting glutamine to glutamate. PurL transfers the ammonia molecule to FGAR to form FGAM in an ATP-dependent manner. PurS interacts with PurQ and PurL and is thought to assist in the transfer of the ammonia molecule from PurQ to PurL.</text>
</comment>
<comment type="catalytic activity">
    <reaction evidence="1">
        <text>N(2)-formyl-N(1)-(5-phospho-beta-D-ribosyl)glycinamide + L-glutamine + ATP + H2O = 2-formamido-N(1)-(5-O-phospho-beta-D-ribosyl)acetamidine + L-glutamate + ADP + phosphate + H(+)</text>
        <dbReference type="Rhea" id="RHEA:17129"/>
        <dbReference type="ChEBI" id="CHEBI:15377"/>
        <dbReference type="ChEBI" id="CHEBI:15378"/>
        <dbReference type="ChEBI" id="CHEBI:29985"/>
        <dbReference type="ChEBI" id="CHEBI:30616"/>
        <dbReference type="ChEBI" id="CHEBI:43474"/>
        <dbReference type="ChEBI" id="CHEBI:58359"/>
        <dbReference type="ChEBI" id="CHEBI:147286"/>
        <dbReference type="ChEBI" id="CHEBI:147287"/>
        <dbReference type="ChEBI" id="CHEBI:456216"/>
        <dbReference type="EC" id="6.3.5.3"/>
    </reaction>
</comment>
<comment type="pathway">
    <text evidence="1">Purine metabolism; IMP biosynthesis via de novo pathway; 5-amino-1-(5-phospho-D-ribosyl)imidazole from N(2)-formyl-N(1)-(5-phospho-D-ribosyl)glycinamide: step 1/2.</text>
</comment>
<comment type="subunit">
    <text evidence="1">Monomer. Part of the FGAM synthase complex composed of 1 PurL, 1 PurQ and 2 PurS subunits.</text>
</comment>
<comment type="subcellular location">
    <subcellularLocation>
        <location evidence="1">Cytoplasm</location>
    </subcellularLocation>
</comment>
<comment type="similarity">
    <text evidence="1">Belongs to the FGAMS family.</text>
</comment>
<accession>Q9PNY0</accession>
<accession>Q0P9U4</accession>
<sequence length="728" mass="79310">MDKETIKAHKISDEEYAQILEILGREPNLLELGVISAMWSEHCSYKSSKKYLNGFPTKAPWVIQGPGENAGVIDIGQGMAAVFKVESHNHPSFIEPFAGAATGVGGILRDVFTMGARVVAGLNSLKFGDIHDEKCGKHQKYLVKGVVNGISHYGNCMGVPTIGGECAFDECFNGNILVNAFALGVCKSEDIFYAKAEGVGNPVIYVGSKTGRDGLGGAVMASDSFNEESKSLRPTVQIGDPFSEKLLMEACLELFKTDYIVGIQDMGAAGLTSSSFEMAGRSGSGMKLYLDKTPMRESGMTPYELMLSESQERMLICAKKGYEDKVIEIFKKWDLDAVVMGEVTNTGKMELFWHDELVGLIPIEPLSEKAPILSRPTSEPKYLSEIKNYKFELKSSVQELFIQMLQNENINNKAFIYDQFDSSVQTNTIKADGRLGASVIRIKENGASVAMAIECNSRLNYVNSKIGAALAVASAGRKVACTGAKPLAISDCLNYGNPQNPEVMWQFAQGCEGIKEACKELNTPVVSGNVSLYNETEGVSIYPSPTIVSVGVLEDANKTLKASFEKENLSVYLLGESLGEFSGSMVMKIQDKKVSGSLKELDYKAELALWDLLYKANQNSLLECANSVGIGGIAMTLAKMFAISSVGANLTSDFDDEKMIFDESASRAIIGLSKENEEAFLNLAKEFGVKAYKLGVSTSQKHFKLDSIELSKAELDKLYFESFKEQIQ</sequence>
<evidence type="ECO:0000255" key="1">
    <source>
        <dbReference type="HAMAP-Rule" id="MF_00420"/>
    </source>
</evidence>
<feature type="chain" id="PRO_0000100446" description="Phosphoribosylformylglycinamidine synthase subunit PurL">
    <location>
        <begin position="1"/>
        <end position="728"/>
    </location>
</feature>
<feature type="active site" evidence="1">
    <location>
        <position position="42"/>
    </location>
</feature>
<feature type="active site" description="Proton acceptor" evidence="1">
    <location>
        <position position="88"/>
    </location>
</feature>
<feature type="binding site" evidence="1">
    <location>
        <position position="45"/>
    </location>
    <ligand>
        <name>ATP</name>
        <dbReference type="ChEBI" id="CHEBI:30616"/>
    </ligand>
</feature>
<feature type="binding site" evidence="1">
    <location>
        <position position="84"/>
    </location>
    <ligand>
        <name>ATP</name>
        <dbReference type="ChEBI" id="CHEBI:30616"/>
    </ligand>
</feature>
<feature type="binding site" evidence="1">
    <location>
        <position position="86"/>
    </location>
    <ligand>
        <name>Mg(2+)</name>
        <dbReference type="ChEBI" id="CHEBI:18420"/>
        <label>1</label>
    </ligand>
</feature>
<feature type="binding site" evidence="1">
    <location>
        <begin position="87"/>
        <end position="90"/>
    </location>
    <ligand>
        <name>substrate</name>
    </ligand>
</feature>
<feature type="binding site" evidence="1">
    <location>
        <position position="109"/>
    </location>
    <ligand>
        <name>substrate</name>
    </ligand>
</feature>
<feature type="binding site" evidence="1">
    <location>
        <position position="110"/>
    </location>
    <ligand>
        <name>Mg(2+)</name>
        <dbReference type="ChEBI" id="CHEBI:18420"/>
        <label>2</label>
    </ligand>
</feature>
<feature type="binding site" evidence="1">
    <location>
        <position position="237"/>
    </location>
    <ligand>
        <name>substrate</name>
    </ligand>
</feature>
<feature type="binding site" evidence="1">
    <location>
        <position position="265"/>
    </location>
    <ligand>
        <name>Mg(2+)</name>
        <dbReference type="ChEBI" id="CHEBI:18420"/>
        <label>2</label>
    </ligand>
</feature>
<feature type="binding site" evidence="1">
    <location>
        <begin position="309"/>
        <end position="311"/>
    </location>
    <ligand>
        <name>substrate</name>
    </ligand>
</feature>
<feature type="binding site" evidence="1">
    <location>
        <position position="491"/>
    </location>
    <ligand>
        <name>ATP</name>
        <dbReference type="ChEBI" id="CHEBI:30616"/>
    </ligand>
</feature>
<feature type="binding site" evidence="1">
    <location>
        <position position="528"/>
    </location>
    <ligand>
        <name>ATP</name>
        <dbReference type="ChEBI" id="CHEBI:30616"/>
    </ligand>
</feature>
<feature type="binding site" evidence="1">
    <location>
        <position position="529"/>
    </location>
    <ligand>
        <name>Mg(2+)</name>
        <dbReference type="ChEBI" id="CHEBI:18420"/>
        <label>1</label>
    </ligand>
</feature>
<feature type="binding site" evidence="1">
    <location>
        <position position="531"/>
    </location>
    <ligand>
        <name>substrate</name>
    </ligand>
</feature>
<protein>
    <recommendedName>
        <fullName evidence="1">Phosphoribosylformylglycinamidine synthase subunit PurL</fullName>
        <shortName evidence="1">FGAM synthase</shortName>
        <ecNumber evidence="1">6.3.5.3</ecNumber>
    </recommendedName>
    <alternativeName>
        <fullName evidence="1">Formylglycinamide ribonucleotide amidotransferase subunit II</fullName>
        <shortName evidence="1">FGAR amidotransferase II</shortName>
        <shortName evidence="1">FGAR-AT II</shortName>
    </alternativeName>
    <alternativeName>
        <fullName evidence="1">Glutamine amidotransferase PurL</fullName>
    </alternativeName>
    <alternativeName>
        <fullName evidence="1">Phosphoribosylformylglycinamidine synthase subunit II</fullName>
    </alternativeName>
</protein>
<dbReference type="EC" id="6.3.5.3" evidence="1"/>
<dbReference type="EMBL" id="AL111168">
    <property type="protein sequence ID" value="CAL35075.1"/>
    <property type="molecule type" value="Genomic_DNA"/>
</dbReference>
<dbReference type="PIR" id="B81370">
    <property type="entry name" value="B81370"/>
</dbReference>
<dbReference type="RefSeq" id="WP_002858406.1">
    <property type="nucleotide sequence ID" value="NZ_SZUC01000001.1"/>
</dbReference>
<dbReference type="RefSeq" id="YP_002344353.1">
    <property type="nucleotide sequence ID" value="NC_002163.1"/>
</dbReference>
<dbReference type="SMR" id="Q9PNY0"/>
<dbReference type="IntAct" id="Q9PNY0">
    <property type="interactions" value="3"/>
</dbReference>
<dbReference type="STRING" id="192222.Cj0955c"/>
<dbReference type="PaxDb" id="192222-Cj0955c"/>
<dbReference type="EnsemblBacteria" id="CAL35075">
    <property type="protein sequence ID" value="CAL35075"/>
    <property type="gene ID" value="Cj0955c"/>
</dbReference>
<dbReference type="GeneID" id="904957"/>
<dbReference type="KEGG" id="cje:Cj0955c"/>
<dbReference type="PATRIC" id="fig|192222.6.peg.939"/>
<dbReference type="eggNOG" id="COG0046">
    <property type="taxonomic scope" value="Bacteria"/>
</dbReference>
<dbReference type="HOGENOM" id="CLU_003100_0_1_7"/>
<dbReference type="OrthoDB" id="9804441at2"/>
<dbReference type="UniPathway" id="UPA00074">
    <property type="reaction ID" value="UER00128"/>
</dbReference>
<dbReference type="Proteomes" id="UP000000799">
    <property type="component" value="Chromosome"/>
</dbReference>
<dbReference type="GO" id="GO:0005737">
    <property type="term" value="C:cytoplasm"/>
    <property type="evidence" value="ECO:0007669"/>
    <property type="project" value="UniProtKB-SubCell"/>
</dbReference>
<dbReference type="GO" id="GO:0005524">
    <property type="term" value="F:ATP binding"/>
    <property type="evidence" value="ECO:0007669"/>
    <property type="project" value="UniProtKB-UniRule"/>
</dbReference>
<dbReference type="GO" id="GO:0000287">
    <property type="term" value="F:magnesium ion binding"/>
    <property type="evidence" value="ECO:0007669"/>
    <property type="project" value="UniProtKB-UniRule"/>
</dbReference>
<dbReference type="GO" id="GO:0004642">
    <property type="term" value="F:phosphoribosylformylglycinamidine synthase activity"/>
    <property type="evidence" value="ECO:0007669"/>
    <property type="project" value="UniProtKB-UniRule"/>
</dbReference>
<dbReference type="GO" id="GO:0006189">
    <property type="term" value="P:'de novo' IMP biosynthetic process"/>
    <property type="evidence" value="ECO:0007669"/>
    <property type="project" value="UniProtKB-UniRule"/>
</dbReference>
<dbReference type="CDD" id="cd02203">
    <property type="entry name" value="PurL_repeat1"/>
    <property type="match status" value="1"/>
</dbReference>
<dbReference type="CDD" id="cd02204">
    <property type="entry name" value="PurL_repeat2"/>
    <property type="match status" value="1"/>
</dbReference>
<dbReference type="FunFam" id="3.30.1330.10:FF:000004">
    <property type="entry name" value="Phosphoribosylformylglycinamidine synthase subunit PurL"/>
    <property type="match status" value="1"/>
</dbReference>
<dbReference type="Gene3D" id="3.90.650.10">
    <property type="entry name" value="PurM-like C-terminal domain"/>
    <property type="match status" value="2"/>
</dbReference>
<dbReference type="Gene3D" id="3.30.1330.10">
    <property type="entry name" value="PurM-like, N-terminal domain"/>
    <property type="match status" value="2"/>
</dbReference>
<dbReference type="HAMAP" id="MF_00420">
    <property type="entry name" value="PurL_2"/>
    <property type="match status" value="1"/>
</dbReference>
<dbReference type="InterPro" id="IPR010074">
    <property type="entry name" value="PRibForGlyAmidine_synth_PurL"/>
</dbReference>
<dbReference type="InterPro" id="IPR041609">
    <property type="entry name" value="PurL_linker"/>
</dbReference>
<dbReference type="InterPro" id="IPR010918">
    <property type="entry name" value="PurM-like_C_dom"/>
</dbReference>
<dbReference type="InterPro" id="IPR036676">
    <property type="entry name" value="PurM-like_C_sf"/>
</dbReference>
<dbReference type="InterPro" id="IPR016188">
    <property type="entry name" value="PurM-like_N"/>
</dbReference>
<dbReference type="InterPro" id="IPR036921">
    <property type="entry name" value="PurM-like_N_sf"/>
</dbReference>
<dbReference type="NCBIfam" id="TIGR01736">
    <property type="entry name" value="FGAM_synth_II"/>
    <property type="match status" value="1"/>
</dbReference>
<dbReference type="NCBIfam" id="NF002290">
    <property type="entry name" value="PRK01213.1"/>
    <property type="match status" value="1"/>
</dbReference>
<dbReference type="PANTHER" id="PTHR43555">
    <property type="entry name" value="PHOSPHORIBOSYLFORMYLGLYCINAMIDINE SYNTHASE SUBUNIT PURL"/>
    <property type="match status" value="1"/>
</dbReference>
<dbReference type="PANTHER" id="PTHR43555:SF1">
    <property type="entry name" value="PHOSPHORIBOSYLFORMYLGLYCINAMIDINE SYNTHASE SUBUNIT PURL"/>
    <property type="match status" value="1"/>
</dbReference>
<dbReference type="Pfam" id="PF00586">
    <property type="entry name" value="AIRS"/>
    <property type="match status" value="2"/>
</dbReference>
<dbReference type="Pfam" id="PF02769">
    <property type="entry name" value="AIRS_C"/>
    <property type="match status" value="2"/>
</dbReference>
<dbReference type="Pfam" id="PF18072">
    <property type="entry name" value="FGAR-AT_linker"/>
    <property type="match status" value="1"/>
</dbReference>
<dbReference type="PIRSF" id="PIRSF001587">
    <property type="entry name" value="FGAM_synthase_II"/>
    <property type="match status" value="1"/>
</dbReference>
<dbReference type="SUPFAM" id="SSF56042">
    <property type="entry name" value="PurM C-terminal domain-like"/>
    <property type="match status" value="2"/>
</dbReference>
<dbReference type="SUPFAM" id="SSF55326">
    <property type="entry name" value="PurM N-terminal domain-like"/>
    <property type="match status" value="2"/>
</dbReference>
<proteinExistence type="inferred from homology"/>
<name>PURL_CAMJE</name>